<proteinExistence type="predicted"/>
<reference key="1">
    <citation type="journal article" date="1996" name="Science">
        <title>Complete genome sequence of the methanogenic archaeon, Methanococcus jannaschii.</title>
        <authorList>
            <person name="Bult C.J."/>
            <person name="White O."/>
            <person name="Olsen G.J."/>
            <person name="Zhou L."/>
            <person name="Fleischmann R.D."/>
            <person name="Sutton G.G."/>
            <person name="Blake J.A."/>
            <person name="FitzGerald L.M."/>
            <person name="Clayton R.A."/>
            <person name="Gocayne J.D."/>
            <person name="Kerlavage A.R."/>
            <person name="Dougherty B.A."/>
            <person name="Tomb J.-F."/>
            <person name="Adams M.D."/>
            <person name="Reich C.I."/>
            <person name="Overbeek R."/>
            <person name="Kirkness E.F."/>
            <person name="Weinstock K.G."/>
            <person name="Merrick J.M."/>
            <person name="Glodek A."/>
            <person name="Scott J.L."/>
            <person name="Geoghagen N.S.M."/>
            <person name="Weidman J.F."/>
            <person name="Fuhrmann J.L."/>
            <person name="Nguyen D."/>
            <person name="Utterback T.R."/>
            <person name="Kelley J.M."/>
            <person name="Peterson J.D."/>
            <person name="Sadow P.W."/>
            <person name="Hanna M.C."/>
            <person name="Cotton M.D."/>
            <person name="Roberts K.M."/>
            <person name="Hurst M.A."/>
            <person name="Kaine B.P."/>
            <person name="Borodovsky M."/>
            <person name="Klenk H.-P."/>
            <person name="Fraser C.M."/>
            <person name="Smith H.O."/>
            <person name="Woese C.R."/>
            <person name="Venter J.C."/>
        </authorList>
    </citation>
    <scope>NUCLEOTIDE SEQUENCE [LARGE SCALE GENOMIC DNA]</scope>
    <source>
        <strain>ATCC 43067 / DSM 2661 / JAL-1 / JCM 10045 / NBRC 100440</strain>
    </source>
</reference>
<organism>
    <name type="scientific">Methanocaldococcus jannaschii (strain ATCC 43067 / DSM 2661 / JAL-1 / JCM 10045 / NBRC 100440)</name>
    <name type="common">Methanococcus jannaschii</name>
    <dbReference type="NCBI Taxonomy" id="243232"/>
    <lineage>
        <taxon>Archaea</taxon>
        <taxon>Methanobacteriati</taxon>
        <taxon>Methanobacteriota</taxon>
        <taxon>Methanomada group</taxon>
        <taxon>Methanococci</taxon>
        <taxon>Methanococcales</taxon>
        <taxon>Methanocaldococcaceae</taxon>
        <taxon>Methanocaldococcus</taxon>
    </lineage>
</organism>
<protein>
    <recommendedName>
        <fullName>Uncharacterized protein MJ0414</fullName>
    </recommendedName>
</protein>
<feature type="chain" id="PRO_0000106860" description="Uncharacterized protein MJ0414">
    <location>
        <begin position="1"/>
        <end position="395"/>
    </location>
</feature>
<accession>Q57857</accession>
<keyword id="KW-1185">Reference proteome</keyword>
<dbReference type="EMBL" id="L77117">
    <property type="protein sequence ID" value="AAB98403.1"/>
    <property type="molecule type" value="Genomic_DNA"/>
</dbReference>
<dbReference type="PIR" id="F64351">
    <property type="entry name" value="F64351"/>
</dbReference>
<dbReference type="SMR" id="Q57857"/>
<dbReference type="STRING" id="243232.MJ_0414"/>
<dbReference type="PaxDb" id="243232-MJ_0414"/>
<dbReference type="EnsemblBacteria" id="AAB98403">
    <property type="protein sequence ID" value="AAB98403"/>
    <property type="gene ID" value="MJ_0414"/>
</dbReference>
<dbReference type="KEGG" id="mja:MJ_0414"/>
<dbReference type="eggNOG" id="arCOG04218">
    <property type="taxonomic scope" value="Archaea"/>
</dbReference>
<dbReference type="HOGENOM" id="CLU_061502_0_0_2"/>
<dbReference type="InParanoid" id="Q57857"/>
<dbReference type="OrthoDB" id="14524at2157"/>
<dbReference type="PhylomeDB" id="Q57857"/>
<dbReference type="Proteomes" id="UP000000805">
    <property type="component" value="Chromosome"/>
</dbReference>
<dbReference type="CDD" id="cd07894">
    <property type="entry name" value="Adenylation_RNA_ligase"/>
    <property type="match status" value="1"/>
</dbReference>
<dbReference type="Gene3D" id="3.10.450.740">
    <property type="match status" value="1"/>
</dbReference>
<dbReference type="Gene3D" id="3.30.1490.70">
    <property type="match status" value="1"/>
</dbReference>
<dbReference type="Gene3D" id="3.30.70.2160">
    <property type="match status" value="1"/>
</dbReference>
<dbReference type="Gene3D" id="3.30.470.30">
    <property type="entry name" value="DNA ligase/mRNA capping enzyme"/>
    <property type="match status" value="1"/>
</dbReference>
<dbReference type="InterPro" id="IPR041596">
    <property type="entry name" value="Lig_Pab1020_C"/>
</dbReference>
<dbReference type="InterPro" id="IPR021122">
    <property type="entry name" value="RNA_ligase_dom_REL/Rnl2"/>
</dbReference>
<dbReference type="InterPro" id="IPR001072">
    <property type="entry name" value="RNA_ligase_Pab1020"/>
</dbReference>
<dbReference type="NCBIfam" id="TIGR01209">
    <property type="entry name" value="RNA ligase"/>
    <property type="match status" value="1"/>
</dbReference>
<dbReference type="Pfam" id="PF18330">
    <property type="entry name" value="Lig_C"/>
    <property type="match status" value="1"/>
</dbReference>
<dbReference type="Pfam" id="PF09414">
    <property type="entry name" value="RNA_ligase"/>
    <property type="match status" value="1"/>
</dbReference>
<dbReference type="PRINTS" id="PR01048">
    <property type="entry name" value="Y414FAMILY"/>
</dbReference>
<dbReference type="SUPFAM" id="SSF56091">
    <property type="entry name" value="DNA ligase/mRNA capping enzyme, catalytic domain"/>
    <property type="match status" value="1"/>
</dbReference>
<name>Y414_METJA</name>
<gene>
    <name type="ordered locus">MJ0414</name>
</gene>
<sequence length="395" mass="46417">MRLIMMKVSAYDLNKIAEKLNLSIKDLNKAFSRKILREDEYKEIKTLLFKKEFKGIEKGTVIFLNDNLDVVRGYPKTYRAITLYPTIKKHFIDKVVIEEKLNGYNIRIVKIDGEVYALTRSGYICPFTTKKVKKFLNLEILDDYSEYMLCGEMIGINNPYTPYYYKEVDRGFENLGFYIFDIKERETNKSLPIKERINLCEKYNLPYVKPLAVVDKDEAHIHVREIIEKLNKEGREGVVLKDPDMAVSPIKYTTHYTQCEDLKSAFTFFFDLGMDFLFSRVVREGFMSYEFKETLEERKNRAKDLGEAILLPMVETINKVASGERVSEDFELIFDSEEDFDEFLDFMRKMKMVITIKNIEKIDTEEGVKIKAVIGKIYNKTNDKIISYLNGTLWE</sequence>